<feature type="chain" id="PRO_1000165471" description="Small ribosomal subunit protein uS3">
    <location>
        <begin position="1"/>
        <end position="223"/>
    </location>
</feature>
<feature type="domain" description="KH type-2" evidence="1">
    <location>
        <begin position="38"/>
        <end position="106"/>
    </location>
</feature>
<protein>
    <recommendedName>
        <fullName evidence="1">Small ribosomal subunit protein uS3</fullName>
    </recommendedName>
    <alternativeName>
        <fullName evidence="2">30S ribosomal protein S3</fullName>
    </alternativeName>
</protein>
<gene>
    <name evidence="1" type="primary">rpsC</name>
    <name type="ordered locus">ACP_1445</name>
</gene>
<accession>C1F636</accession>
<sequence>MGQKVHPYGFRLGVNKPWRSRWFVERDYDKLLVEDVHLKRELKEKLKAAGVSSVEVERPGNKLRLIIRTARPGIIIGRKGAEIEKLKADLQKRTNREVFIDILEVNKPELDAQLIAENIALQLEKRVGFRRAMRKAVDSALRFGCKGIKVRVSGRLNGNEIARSEWYLQGRLPLHTLRADIDYGFAEAHTTYGIIGVKTWVYRGDIYQQRRREPQAAVGTSVF</sequence>
<reference key="1">
    <citation type="journal article" date="2009" name="Appl. Environ. Microbiol.">
        <title>Three genomes from the phylum Acidobacteria provide insight into the lifestyles of these microorganisms in soils.</title>
        <authorList>
            <person name="Ward N.L."/>
            <person name="Challacombe J.F."/>
            <person name="Janssen P.H."/>
            <person name="Henrissat B."/>
            <person name="Coutinho P.M."/>
            <person name="Wu M."/>
            <person name="Xie G."/>
            <person name="Haft D.H."/>
            <person name="Sait M."/>
            <person name="Badger J."/>
            <person name="Barabote R.D."/>
            <person name="Bradley B."/>
            <person name="Brettin T.S."/>
            <person name="Brinkac L.M."/>
            <person name="Bruce D."/>
            <person name="Creasy T."/>
            <person name="Daugherty S.C."/>
            <person name="Davidsen T.M."/>
            <person name="DeBoy R.T."/>
            <person name="Detter J.C."/>
            <person name="Dodson R.J."/>
            <person name="Durkin A.S."/>
            <person name="Ganapathy A."/>
            <person name="Gwinn-Giglio M."/>
            <person name="Han C.S."/>
            <person name="Khouri H."/>
            <person name="Kiss H."/>
            <person name="Kothari S.P."/>
            <person name="Madupu R."/>
            <person name="Nelson K.E."/>
            <person name="Nelson W.C."/>
            <person name="Paulsen I."/>
            <person name="Penn K."/>
            <person name="Ren Q."/>
            <person name="Rosovitz M.J."/>
            <person name="Selengut J.D."/>
            <person name="Shrivastava S."/>
            <person name="Sullivan S.A."/>
            <person name="Tapia R."/>
            <person name="Thompson L.S."/>
            <person name="Watkins K.L."/>
            <person name="Yang Q."/>
            <person name="Yu C."/>
            <person name="Zafar N."/>
            <person name="Zhou L."/>
            <person name="Kuske C.R."/>
        </authorList>
    </citation>
    <scope>NUCLEOTIDE SEQUENCE [LARGE SCALE GENOMIC DNA]</scope>
    <source>
        <strain>ATCC 51196 / DSM 11244 / BCRC 80197 / JCM 7670 / NBRC 15755 / NCIMB 13165 / 161</strain>
    </source>
</reference>
<name>RS3_ACIC5</name>
<proteinExistence type="inferred from homology"/>
<keyword id="KW-1185">Reference proteome</keyword>
<keyword id="KW-0687">Ribonucleoprotein</keyword>
<keyword id="KW-0689">Ribosomal protein</keyword>
<keyword id="KW-0694">RNA-binding</keyword>
<keyword id="KW-0699">rRNA-binding</keyword>
<organism>
    <name type="scientific">Acidobacterium capsulatum (strain ATCC 51196 / DSM 11244 / BCRC 80197 / JCM 7670 / NBRC 15755 / NCIMB 13165 / 161)</name>
    <dbReference type="NCBI Taxonomy" id="240015"/>
    <lineage>
        <taxon>Bacteria</taxon>
        <taxon>Pseudomonadati</taxon>
        <taxon>Acidobacteriota</taxon>
        <taxon>Terriglobia</taxon>
        <taxon>Terriglobales</taxon>
        <taxon>Acidobacteriaceae</taxon>
        <taxon>Acidobacterium</taxon>
    </lineage>
</organism>
<evidence type="ECO:0000255" key="1">
    <source>
        <dbReference type="HAMAP-Rule" id="MF_01309"/>
    </source>
</evidence>
<evidence type="ECO:0000305" key="2"/>
<comment type="function">
    <text evidence="1">Binds the lower part of the 30S subunit head. Binds mRNA in the 70S ribosome, positioning it for translation.</text>
</comment>
<comment type="subunit">
    <text evidence="1">Part of the 30S ribosomal subunit. Forms a tight complex with proteins S10 and S14.</text>
</comment>
<comment type="similarity">
    <text evidence="1">Belongs to the universal ribosomal protein uS3 family.</text>
</comment>
<dbReference type="EMBL" id="CP001472">
    <property type="protein sequence ID" value="ACO34582.1"/>
    <property type="molecule type" value="Genomic_DNA"/>
</dbReference>
<dbReference type="RefSeq" id="WP_015896578.1">
    <property type="nucleotide sequence ID" value="NC_012483.1"/>
</dbReference>
<dbReference type="SMR" id="C1F636"/>
<dbReference type="FunCoup" id="C1F636">
    <property type="interactions" value="678"/>
</dbReference>
<dbReference type="STRING" id="240015.ACP_1445"/>
<dbReference type="KEGG" id="aca:ACP_1445"/>
<dbReference type="eggNOG" id="COG0092">
    <property type="taxonomic scope" value="Bacteria"/>
</dbReference>
<dbReference type="HOGENOM" id="CLU_058591_0_2_0"/>
<dbReference type="InParanoid" id="C1F636"/>
<dbReference type="OrthoDB" id="9806396at2"/>
<dbReference type="Proteomes" id="UP000002207">
    <property type="component" value="Chromosome"/>
</dbReference>
<dbReference type="GO" id="GO:0022627">
    <property type="term" value="C:cytosolic small ribosomal subunit"/>
    <property type="evidence" value="ECO:0007669"/>
    <property type="project" value="TreeGrafter"/>
</dbReference>
<dbReference type="GO" id="GO:0003729">
    <property type="term" value="F:mRNA binding"/>
    <property type="evidence" value="ECO:0007669"/>
    <property type="project" value="UniProtKB-UniRule"/>
</dbReference>
<dbReference type="GO" id="GO:0019843">
    <property type="term" value="F:rRNA binding"/>
    <property type="evidence" value="ECO:0007669"/>
    <property type="project" value="UniProtKB-UniRule"/>
</dbReference>
<dbReference type="GO" id="GO:0003735">
    <property type="term" value="F:structural constituent of ribosome"/>
    <property type="evidence" value="ECO:0007669"/>
    <property type="project" value="InterPro"/>
</dbReference>
<dbReference type="GO" id="GO:0006412">
    <property type="term" value="P:translation"/>
    <property type="evidence" value="ECO:0007669"/>
    <property type="project" value="UniProtKB-UniRule"/>
</dbReference>
<dbReference type="CDD" id="cd02412">
    <property type="entry name" value="KH-II_30S_S3"/>
    <property type="match status" value="1"/>
</dbReference>
<dbReference type="FunFam" id="3.30.1140.32:FF:000002">
    <property type="entry name" value="30S ribosomal protein S3"/>
    <property type="match status" value="1"/>
</dbReference>
<dbReference type="FunFam" id="3.30.300.20:FF:000001">
    <property type="entry name" value="30S ribosomal protein S3"/>
    <property type="match status" value="1"/>
</dbReference>
<dbReference type="Gene3D" id="3.30.300.20">
    <property type="match status" value="1"/>
</dbReference>
<dbReference type="Gene3D" id="3.30.1140.32">
    <property type="entry name" value="Ribosomal protein S3, C-terminal domain"/>
    <property type="match status" value="1"/>
</dbReference>
<dbReference type="HAMAP" id="MF_01309_B">
    <property type="entry name" value="Ribosomal_uS3_B"/>
    <property type="match status" value="1"/>
</dbReference>
<dbReference type="InterPro" id="IPR004087">
    <property type="entry name" value="KH_dom"/>
</dbReference>
<dbReference type="InterPro" id="IPR015946">
    <property type="entry name" value="KH_dom-like_a/b"/>
</dbReference>
<dbReference type="InterPro" id="IPR004044">
    <property type="entry name" value="KH_dom_type_2"/>
</dbReference>
<dbReference type="InterPro" id="IPR009019">
    <property type="entry name" value="KH_sf_prok-type"/>
</dbReference>
<dbReference type="InterPro" id="IPR036419">
    <property type="entry name" value="Ribosomal_S3_C_sf"/>
</dbReference>
<dbReference type="InterPro" id="IPR005704">
    <property type="entry name" value="Ribosomal_uS3_bac-typ"/>
</dbReference>
<dbReference type="InterPro" id="IPR001351">
    <property type="entry name" value="Ribosomal_uS3_C"/>
</dbReference>
<dbReference type="InterPro" id="IPR018280">
    <property type="entry name" value="Ribosomal_uS3_CS"/>
</dbReference>
<dbReference type="NCBIfam" id="TIGR01009">
    <property type="entry name" value="rpsC_bact"/>
    <property type="match status" value="1"/>
</dbReference>
<dbReference type="PANTHER" id="PTHR11760">
    <property type="entry name" value="30S/40S RIBOSOMAL PROTEIN S3"/>
    <property type="match status" value="1"/>
</dbReference>
<dbReference type="PANTHER" id="PTHR11760:SF19">
    <property type="entry name" value="SMALL RIBOSOMAL SUBUNIT PROTEIN US3C"/>
    <property type="match status" value="1"/>
</dbReference>
<dbReference type="Pfam" id="PF07650">
    <property type="entry name" value="KH_2"/>
    <property type="match status" value="1"/>
</dbReference>
<dbReference type="Pfam" id="PF00189">
    <property type="entry name" value="Ribosomal_S3_C"/>
    <property type="match status" value="1"/>
</dbReference>
<dbReference type="SMART" id="SM00322">
    <property type="entry name" value="KH"/>
    <property type="match status" value="1"/>
</dbReference>
<dbReference type="SUPFAM" id="SSF54814">
    <property type="entry name" value="Prokaryotic type KH domain (KH-domain type II)"/>
    <property type="match status" value="1"/>
</dbReference>
<dbReference type="SUPFAM" id="SSF54821">
    <property type="entry name" value="Ribosomal protein S3 C-terminal domain"/>
    <property type="match status" value="1"/>
</dbReference>
<dbReference type="PROSITE" id="PS50823">
    <property type="entry name" value="KH_TYPE_2"/>
    <property type="match status" value="1"/>
</dbReference>
<dbReference type="PROSITE" id="PS00548">
    <property type="entry name" value="RIBOSOMAL_S3"/>
    <property type="match status" value="1"/>
</dbReference>